<protein>
    <recommendedName>
        <fullName>Uncharacterized protein MPN_508</fullName>
    </recommendedName>
</protein>
<organism>
    <name type="scientific">Mycoplasma pneumoniae (strain ATCC 29342 / M129 / Subtype 1)</name>
    <name type="common">Mycoplasmoides pneumoniae</name>
    <dbReference type="NCBI Taxonomy" id="272634"/>
    <lineage>
        <taxon>Bacteria</taxon>
        <taxon>Bacillati</taxon>
        <taxon>Mycoplasmatota</taxon>
        <taxon>Mycoplasmoidales</taxon>
        <taxon>Mycoplasmoidaceae</taxon>
        <taxon>Mycoplasmoides</taxon>
    </lineage>
</organism>
<gene>
    <name type="ordered locus">MPN_508</name>
    <name type="ORF">MP334</name>
    <name type="ORF">P02_orf509</name>
</gene>
<keyword id="KW-1185">Reference proteome</keyword>
<evidence type="ECO:0000305" key="1"/>
<sequence>MNQLQAEINAANAVFPVSDSTKIPKVSQKLFGLLGDGFFPQLHPKGLKIADNIAALFDQYNLKSIALKNFDLNLERKNDIVIQGKVCYSFSIKMDFATIYEGDGSTIDLQFALNASTTNFANLTDLQDSFWQSGKDLNTQLFWKPSVHKLISNGTNDLTTLAQTALGDSLFDTKVNLTESVIEINNQTDVATKFREKVLNSFKQEREKAHAEHVEKLRKLEEERKLQEAEAKAKAEEVKKLEAEREAFNKSLTAASEFKQYWSKKNKDVTDKKQLAEALKISLEADRNRTFSFLIAGFRTAIDWYYNAKKENNDAKQKAFGSQGIQFPKDGLNGIYMPDWLRGELTSKSNINLKIKELKVQNKIESPTINWIDGVGIKQDKANPFNYRFEVDIKYTGGYQLYGFYAFAALFTKFPSSWSGEMNLKFIVDGSIPVYTVAKKDYPGSLFQFNDKDELLFTLYVKEQISVADPNFMNLLRGQNLHDLELVTGATKPPVVDLASYLHFVLLSA</sequence>
<proteinExistence type="inferred from homology"/>
<feature type="chain" id="PRO_0000215255" description="Uncharacterized protein MPN_508">
    <location>
        <begin position="1"/>
        <end position="509"/>
    </location>
</feature>
<reference key="1">
    <citation type="journal article" date="1996" name="Nucleic Acids Res.">
        <title>Complete sequence analysis of the genome of the bacterium Mycoplasma pneumoniae.</title>
        <authorList>
            <person name="Himmelreich R."/>
            <person name="Hilbert H."/>
            <person name="Plagens H."/>
            <person name="Pirkl E."/>
            <person name="Li B.-C."/>
            <person name="Herrmann R."/>
        </authorList>
    </citation>
    <scope>NUCLEOTIDE SEQUENCE [LARGE SCALE GENOMIC DNA]</scope>
    <source>
        <strain>ATCC 29342 / M129 / Subtype 1</strain>
    </source>
</reference>
<dbReference type="EMBL" id="U00089">
    <property type="protein sequence ID" value="AAB95982.1"/>
    <property type="molecule type" value="Genomic_DNA"/>
</dbReference>
<dbReference type="PIR" id="S73660">
    <property type="entry name" value="S73660"/>
</dbReference>
<dbReference type="RefSeq" id="NP_110196.1">
    <property type="nucleotide sequence ID" value="NC_000912.1"/>
</dbReference>
<dbReference type="RefSeq" id="WP_010874864.1">
    <property type="nucleotide sequence ID" value="NC_000912.1"/>
</dbReference>
<dbReference type="SMR" id="P75278"/>
<dbReference type="IntAct" id="P75278">
    <property type="interactions" value="2"/>
</dbReference>
<dbReference type="EnsemblBacteria" id="AAB95982">
    <property type="protein sequence ID" value="AAB95982"/>
    <property type="gene ID" value="MPN_508"/>
</dbReference>
<dbReference type="KEGG" id="mpn:MPN_508"/>
<dbReference type="PATRIC" id="fig|272634.6.peg.557"/>
<dbReference type="HOGENOM" id="CLU_029253_0_0_14"/>
<dbReference type="OrthoDB" id="403320at2"/>
<dbReference type="BioCyc" id="MPNE272634:G1GJ3-831-MONOMER"/>
<dbReference type="Proteomes" id="UP000000808">
    <property type="component" value="Chromosome"/>
</dbReference>
<dbReference type="InterPro" id="IPR004306">
    <property type="entry name" value="DUF237"/>
</dbReference>
<dbReference type="InterPro" id="IPR004319">
    <property type="entry name" value="DUF240"/>
</dbReference>
<dbReference type="Pfam" id="PF03072">
    <property type="entry name" value="DUF237"/>
    <property type="match status" value="1"/>
</dbReference>
<dbReference type="Pfam" id="PF03086">
    <property type="entry name" value="DUF240"/>
    <property type="match status" value="1"/>
</dbReference>
<comment type="similarity">
    <text evidence="1">Belongs to the MG032/MG096/MG288 family.</text>
</comment>
<accession>P75278</accession>
<name>Y508_MYCPN</name>